<protein>
    <recommendedName>
        <fullName>Apoptosis-stimulating of p53 protein 1</fullName>
    </recommendedName>
    <alternativeName>
        <fullName>Protein phosphatase 1 regulatory subunit 13B</fullName>
    </alternativeName>
</protein>
<name>ASPP1_MOUSE</name>
<comment type="function">
    <text evidence="1 2">Regulator that plays a central role in regulation of apoptosis via its interaction with p53/TP53 (By similarity). Regulates TP53 by enhancing the DNA binding and transactivation function of TP53 on the promoters of proapoptotic genes in vivo (By similarity).</text>
</comment>
<comment type="subunit">
    <text evidence="2">Interacts with P53/TP53; the interaction promotes pro-apoptotic activity.</text>
</comment>
<comment type="subcellular location">
    <subcellularLocation>
        <location evidence="1">Cytoplasm</location>
    </subcellularLocation>
    <subcellularLocation>
        <location evidence="1">Nucleus</location>
    </subcellularLocation>
    <text evidence="1">Predominantly cytoplasmic (By similarity). Some fraction is nuclear.</text>
</comment>
<comment type="domain">
    <text evidence="1">The ankyrin repeats and the SH3 domain are required for a specific interactions with TP53.</text>
</comment>
<comment type="miscellaneous">
    <text>In contrast to its official gene name, it is not a regulatory subunit of protein phosphatase 1. This name was given due to its similarity with a protein that binds to protein phosphatase 1.</text>
</comment>
<comment type="similarity">
    <text evidence="5">Belongs to the ASPP family.</text>
</comment>
<proteinExistence type="evidence at protein level"/>
<accession>Q62415</accession>
<organism>
    <name type="scientific">Mus musculus</name>
    <name type="common">Mouse</name>
    <dbReference type="NCBI Taxonomy" id="10090"/>
    <lineage>
        <taxon>Eukaryota</taxon>
        <taxon>Metazoa</taxon>
        <taxon>Chordata</taxon>
        <taxon>Craniata</taxon>
        <taxon>Vertebrata</taxon>
        <taxon>Euteleostomi</taxon>
        <taxon>Mammalia</taxon>
        <taxon>Eutheria</taxon>
        <taxon>Euarchontoglires</taxon>
        <taxon>Glires</taxon>
        <taxon>Rodentia</taxon>
        <taxon>Myomorpha</taxon>
        <taxon>Muroidea</taxon>
        <taxon>Muridae</taxon>
        <taxon>Murinae</taxon>
        <taxon>Mus</taxon>
        <taxon>Mus</taxon>
    </lineage>
</organism>
<keyword id="KW-0040">ANK repeat</keyword>
<keyword id="KW-0053">Apoptosis</keyword>
<keyword id="KW-0963">Cytoplasm</keyword>
<keyword id="KW-0488">Methylation</keyword>
<keyword id="KW-0539">Nucleus</keyword>
<keyword id="KW-0597">Phosphoprotein</keyword>
<keyword id="KW-1185">Reference proteome</keyword>
<keyword id="KW-0677">Repeat</keyword>
<keyword id="KW-0728">SH3 domain</keyword>
<feature type="chain" id="PRO_0000066963" description="Apoptosis-stimulating of p53 protein 1">
    <location>
        <begin position="1"/>
        <end position="1087"/>
    </location>
</feature>
<feature type="repeat" description="ANK 1">
    <location>
        <begin position="917"/>
        <end position="949"/>
    </location>
</feature>
<feature type="repeat" description="ANK 2">
    <location>
        <begin position="950"/>
        <end position="982"/>
    </location>
</feature>
<feature type="domain" description="SH3" evidence="3">
    <location>
        <begin position="1016"/>
        <end position="1078"/>
    </location>
</feature>
<feature type="region of interest" description="Disordered" evidence="4">
    <location>
        <begin position="82"/>
        <end position="122"/>
    </location>
</feature>
<feature type="region of interest" description="Disordered" evidence="4">
    <location>
        <begin position="374"/>
        <end position="415"/>
    </location>
</feature>
<feature type="region of interest" description="Disordered" evidence="4">
    <location>
        <begin position="442"/>
        <end position="721"/>
    </location>
</feature>
<feature type="region of interest" description="Disordered" evidence="4">
    <location>
        <begin position="734"/>
        <end position="878"/>
    </location>
</feature>
<feature type="compositionally biased region" description="Polar residues" evidence="4">
    <location>
        <begin position="87"/>
        <end position="106"/>
    </location>
</feature>
<feature type="compositionally biased region" description="Polar residues" evidence="4">
    <location>
        <begin position="393"/>
        <end position="405"/>
    </location>
</feature>
<feature type="compositionally biased region" description="Pro residues" evidence="4">
    <location>
        <begin position="445"/>
        <end position="458"/>
    </location>
</feature>
<feature type="compositionally biased region" description="Low complexity" evidence="4">
    <location>
        <begin position="459"/>
        <end position="476"/>
    </location>
</feature>
<feature type="compositionally biased region" description="Polar residues" evidence="4">
    <location>
        <begin position="506"/>
        <end position="520"/>
    </location>
</feature>
<feature type="compositionally biased region" description="Pro residues" evidence="4">
    <location>
        <begin position="523"/>
        <end position="536"/>
    </location>
</feature>
<feature type="compositionally biased region" description="Polar residues" evidence="4">
    <location>
        <begin position="570"/>
        <end position="589"/>
    </location>
</feature>
<feature type="compositionally biased region" description="Low complexity" evidence="4">
    <location>
        <begin position="610"/>
        <end position="625"/>
    </location>
</feature>
<feature type="compositionally biased region" description="Polar residues" evidence="4">
    <location>
        <begin position="805"/>
        <end position="831"/>
    </location>
</feature>
<feature type="modified residue" description="Phosphoserine" evidence="2">
    <location>
        <position position="332"/>
    </location>
</feature>
<feature type="modified residue" description="Phosphoserine" evidence="2">
    <location>
        <position position="335"/>
    </location>
</feature>
<feature type="modified residue" description="Asymmetric dimethylarginine" evidence="7">
    <location>
        <position position="552"/>
    </location>
</feature>
<feature type="modified residue" description="Phosphoserine" evidence="2">
    <location>
        <position position="679"/>
    </location>
</feature>
<feature type="modified residue" description="Phosphoserine" evidence="6">
    <location>
        <position position="708"/>
    </location>
</feature>
<gene>
    <name type="primary">Ppp1r13b</name>
    <name type="synonym">Aspp1</name>
</gene>
<reference key="1">
    <citation type="journal article" date="2004" name="Genome Res.">
        <title>The status, quality, and expansion of the NIH full-length cDNA project: the Mammalian Gene Collection (MGC).</title>
        <authorList>
            <consortium name="The MGC Project Team"/>
        </authorList>
    </citation>
    <scope>NUCLEOTIDE SEQUENCE [LARGE SCALE MRNA]</scope>
    <source>
        <strain>C57BL/6J</strain>
        <tissue>Brain</tissue>
    </source>
</reference>
<reference key="2">
    <citation type="journal article" date="1996" name="Nat. Biotechnol.">
        <title>Cloning of ligand targets: systematic isolation of SH3 domain-containing proteins.</title>
        <authorList>
            <person name="Sparks A.B."/>
            <person name="Hoffman N.G."/>
            <person name="McConnell S.J."/>
            <person name="Fowlkes D.M."/>
            <person name="Kay B.K."/>
        </authorList>
    </citation>
    <scope>NUCLEOTIDE SEQUENCE [MRNA] OF 944-1087</scope>
</reference>
<reference key="3">
    <citation type="journal article" date="2010" name="Cell">
        <title>A tissue-specific atlas of mouse protein phosphorylation and expression.</title>
        <authorList>
            <person name="Huttlin E.L."/>
            <person name="Jedrychowski M.P."/>
            <person name="Elias J.E."/>
            <person name="Goswami T."/>
            <person name="Rad R."/>
            <person name="Beausoleil S.A."/>
            <person name="Villen J."/>
            <person name="Haas W."/>
            <person name="Sowa M.E."/>
            <person name="Gygi S.P."/>
        </authorList>
    </citation>
    <scope>PHOSPHORYLATION [LARGE SCALE ANALYSIS] AT SER-708</scope>
    <scope>IDENTIFICATION BY MASS SPECTROMETRY [LARGE SCALE ANALYSIS]</scope>
    <source>
        <tissue>Brain</tissue>
        <tissue>Brown adipose tissue</tissue>
        <tissue>Heart</tissue>
        <tissue>Kidney</tissue>
        <tissue>Lung</tissue>
    </source>
</reference>
<reference key="4">
    <citation type="journal article" date="2014" name="Mol. Cell. Proteomics">
        <title>Immunoaffinity enrichment and mass spectrometry analysis of protein methylation.</title>
        <authorList>
            <person name="Guo A."/>
            <person name="Gu H."/>
            <person name="Zhou J."/>
            <person name="Mulhern D."/>
            <person name="Wang Y."/>
            <person name="Lee K.A."/>
            <person name="Yang V."/>
            <person name="Aguiar M."/>
            <person name="Kornhauser J."/>
            <person name="Jia X."/>
            <person name="Ren J."/>
            <person name="Beausoleil S.A."/>
            <person name="Silva J.C."/>
            <person name="Vemulapalli V."/>
            <person name="Bedford M.T."/>
            <person name="Comb M.J."/>
        </authorList>
    </citation>
    <scope>METHYLATION [LARGE SCALE ANALYSIS] AT ARG-552</scope>
    <scope>IDENTIFICATION BY MASS SPECTROMETRY [LARGE SCALE ANALYSIS]</scope>
    <source>
        <tissue>Brain</tissue>
    </source>
</reference>
<evidence type="ECO:0000250" key="1"/>
<evidence type="ECO:0000250" key="2">
    <source>
        <dbReference type="UniProtKB" id="Q96KQ4"/>
    </source>
</evidence>
<evidence type="ECO:0000255" key="3">
    <source>
        <dbReference type="PROSITE-ProRule" id="PRU00192"/>
    </source>
</evidence>
<evidence type="ECO:0000256" key="4">
    <source>
        <dbReference type="SAM" id="MobiDB-lite"/>
    </source>
</evidence>
<evidence type="ECO:0000305" key="5"/>
<evidence type="ECO:0007744" key="6">
    <source>
    </source>
</evidence>
<evidence type="ECO:0007744" key="7">
    <source>
    </source>
</evidence>
<dbReference type="EMBL" id="BC054788">
    <property type="protein sequence ID" value="AAH54788.1"/>
    <property type="molecule type" value="mRNA"/>
</dbReference>
<dbReference type="EMBL" id="BC053092">
    <property type="protein sequence ID" value="AAH53092.1"/>
    <property type="molecule type" value="mRNA"/>
</dbReference>
<dbReference type="EMBL" id="U58881">
    <property type="protein sequence ID" value="AAC52638.1"/>
    <property type="molecule type" value="mRNA"/>
</dbReference>
<dbReference type="CCDS" id="CCDS56866.1"/>
<dbReference type="RefSeq" id="NP_035755.1">
    <property type="nucleotide sequence ID" value="NM_011625.1"/>
</dbReference>
<dbReference type="SMR" id="Q62415"/>
<dbReference type="BioGRID" id="204283">
    <property type="interactions" value="11"/>
</dbReference>
<dbReference type="FunCoup" id="Q62415">
    <property type="interactions" value="3302"/>
</dbReference>
<dbReference type="IntAct" id="Q62415">
    <property type="interactions" value="1"/>
</dbReference>
<dbReference type="STRING" id="10090.ENSMUSP00000062464"/>
<dbReference type="GlyGen" id="Q62415">
    <property type="glycosylation" value="4 sites, 1 N-linked glycan (2 sites), 1 O-linked glycan (1 site)"/>
</dbReference>
<dbReference type="iPTMnet" id="Q62415"/>
<dbReference type="PhosphoSitePlus" id="Q62415"/>
<dbReference type="jPOST" id="Q62415"/>
<dbReference type="PaxDb" id="10090-ENSMUSP00000062464"/>
<dbReference type="PeptideAtlas" id="Q62415"/>
<dbReference type="ProteomicsDB" id="277047"/>
<dbReference type="Pumba" id="Q62415"/>
<dbReference type="Antibodypedia" id="87">
    <property type="antibodies" value="229 antibodies from 31 providers"/>
</dbReference>
<dbReference type="DNASU" id="21981"/>
<dbReference type="Ensembl" id="ENSMUST00000054815.15">
    <property type="protein sequence ID" value="ENSMUSP00000062464.8"/>
    <property type="gene ID" value="ENSMUSG00000021285.16"/>
</dbReference>
<dbReference type="GeneID" id="21981"/>
<dbReference type="KEGG" id="mmu:21981"/>
<dbReference type="UCSC" id="uc007ped.1">
    <property type="organism name" value="mouse"/>
</dbReference>
<dbReference type="AGR" id="MGI:1336199"/>
<dbReference type="CTD" id="23368"/>
<dbReference type="MGI" id="MGI:1336199">
    <property type="gene designation" value="Ppp1r13b"/>
</dbReference>
<dbReference type="VEuPathDB" id="HostDB:ENSMUSG00000021285"/>
<dbReference type="eggNOG" id="KOG0515">
    <property type="taxonomic scope" value="Eukaryota"/>
</dbReference>
<dbReference type="GeneTree" id="ENSGT00940000153463"/>
<dbReference type="HOGENOM" id="CLU_008234_0_0_1"/>
<dbReference type="InParanoid" id="Q62415"/>
<dbReference type="OMA" id="GFQSHNG"/>
<dbReference type="OrthoDB" id="10038642at2759"/>
<dbReference type="PhylomeDB" id="Q62415"/>
<dbReference type="TreeFam" id="TF105545"/>
<dbReference type="Reactome" id="R-MMU-6804759">
    <property type="pathway name" value="Regulation of TP53 Activity through Association with Co-factors"/>
</dbReference>
<dbReference type="BioGRID-ORCS" id="21981">
    <property type="hits" value="3 hits in 78 CRISPR screens"/>
</dbReference>
<dbReference type="ChiTaRS" id="Ppp1r13b">
    <property type="organism name" value="mouse"/>
</dbReference>
<dbReference type="PRO" id="PR:Q62415"/>
<dbReference type="Proteomes" id="UP000000589">
    <property type="component" value="Chromosome 12"/>
</dbReference>
<dbReference type="RNAct" id="Q62415">
    <property type="molecule type" value="protein"/>
</dbReference>
<dbReference type="Bgee" id="ENSMUSG00000021285">
    <property type="expression patterns" value="Expressed in dorsal pancreas and 227 other cell types or tissues"/>
</dbReference>
<dbReference type="ExpressionAtlas" id="Q62415">
    <property type="expression patterns" value="baseline and differential"/>
</dbReference>
<dbReference type="GO" id="GO:0005829">
    <property type="term" value="C:cytosol"/>
    <property type="evidence" value="ECO:0007669"/>
    <property type="project" value="Ensembl"/>
</dbReference>
<dbReference type="GO" id="GO:0005654">
    <property type="term" value="C:nucleoplasm"/>
    <property type="evidence" value="ECO:0007669"/>
    <property type="project" value="Ensembl"/>
</dbReference>
<dbReference type="GO" id="GO:0005634">
    <property type="term" value="C:nucleus"/>
    <property type="evidence" value="ECO:0000250"/>
    <property type="project" value="UniProtKB"/>
</dbReference>
<dbReference type="GO" id="GO:0005886">
    <property type="term" value="C:plasma membrane"/>
    <property type="evidence" value="ECO:0007669"/>
    <property type="project" value="Ensembl"/>
</dbReference>
<dbReference type="GO" id="GO:0002039">
    <property type="term" value="F:p53 binding"/>
    <property type="evidence" value="ECO:0007669"/>
    <property type="project" value="InterPro"/>
</dbReference>
<dbReference type="GO" id="GO:0072332">
    <property type="term" value="P:intrinsic apoptotic signaling pathway by p53 class mediator"/>
    <property type="evidence" value="ECO:0000250"/>
    <property type="project" value="UniProtKB"/>
</dbReference>
<dbReference type="GO" id="GO:0045786">
    <property type="term" value="P:negative regulation of cell cycle"/>
    <property type="evidence" value="ECO:0007669"/>
    <property type="project" value="InterPro"/>
</dbReference>
<dbReference type="GO" id="GO:0042981">
    <property type="term" value="P:regulation of apoptotic process"/>
    <property type="evidence" value="ECO:0007669"/>
    <property type="project" value="InterPro"/>
</dbReference>
<dbReference type="CDD" id="cd17224">
    <property type="entry name" value="RA_ASPP1"/>
    <property type="match status" value="1"/>
</dbReference>
<dbReference type="FunFam" id="1.25.40.20:FF:000008">
    <property type="entry name" value="Apoptosis-stimulating of p53 protein 2 isoform 1"/>
    <property type="match status" value="1"/>
</dbReference>
<dbReference type="FunFam" id="3.10.20.90:FF:000030">
    <property type="entry name" value="Apoptosis-stimulating of p53 protein 2 isoform 1"/>
    <property type="match status" value="1"/>
</dbReference>
<dbReference type="Gene3D" id="1.25.40.20">
    <property type="entry name" value="Ankyrin repeat-containing domain"/>
    <property type="match status" value="1"/>
</dbReference>
<dbReference type="Gene3D" id="3.10.20.90">
    <property type="entry name" value="Phosphatidylinositol 3-kinase Catalytic Subunit, Chain A, domain 1"/>
    <property type="match status" value="1"/>
</dbReference>
<dbReference type="InterPro" id="IPR002110">
    <property type="entry name" value="Ankyrin_rpt"/>
</dbReference>
<dbReference type="InterPro" id="IPR036770">
    <property type="entry name" value="Ankyrin_rpt-contain_sf"/>
</dbReference>
<dbReference type="InterPro" id="IPR047163">
    <property type="entry name" value="ASPP1/2"/>
</dbReference>
<dbReference type="InterPro" id="IPR028319">
    <property type="entry name" value="ASPP1_RA"/>
</dbReference>
<dbReference type="InterPro" id="IPR048942">
    <property type="entry name" value="ASPP2-like_RA"/>
</dbReference>
<dbReference type="InterPro" id="IPR036028">
    <property type="entry name" value="SH3-like_dom_sf"/>
</dbReference>
<dbReference type="InterPro" id="IPR001452">
    <property type="entry name" value="SH3_domain"/>
</dbReference>
<dbReference type="InterPro" id="IPR029071">
    <property type="entry name" value="Ubiquitin-like_domsf"/>
</dbReference>
<dbReference type="PANTHER" id="PTHR24131">
    <property type="entry name" value="APOPTOSIS-STIMULATING OF P53 PROTEIN"/>
    <property type="match status" value="1"/>
</dbReference>
<dbReference type="PANTHER" id="PTHR24131:SF5">
    <property type="entry name" value="APOPTOSIS-STIMULATING OF P53 PROTEIN 1"/>
    <property type="match status" value="1"/>
</dbReference>
<dbReference type="Pfam" id="PF12796">
    <property type="entry name" value="Ank_2"/>
    <property type="match status" value="1"/>
</dbReference>
<dbReference type="Pfam" id="PF21801">
    <property type="entry name" value="ASPP2-like_RA"/>
    <property type="match status" value="1"/>
</dbReference>
<dbReference type="Pfam" id="PF00018">
    <property type="entry name" value="SH3_1"/>
    <property type="match status" value="1"/>
</dbReference>
<dbReference type="PRINTS" id="PR00452">
    <property type="entry name" value="SH3DOMAIN"/>
</dbReference>
<dbReference type="SMART" id="SM00248">
    <property type="entry name" value="ANK"/>
    <property type="match status" value="2"/>
</dbReference>
<dbReference type="SMART" id="SM00326">
    <property type="entry name" value="SH3"/>
    <property type="match status" value="1"/>
</dbReference>
<dbReference type="SUPFAM" id="SSF48403">
    <property type="entry name" value="Ankyrin repeat"/>
    <property type="match status" value="1"/>
</dbReference>
<dbReference type="SUPFAM" id="SSF50044">
    <property type="entry name" value="SH3-domain"/>
    <property type="match status" value="1"/>
</dbReference>
<dbReference type="SUPFAM" id="SSF54236">
    <property type="entry name" value="Ubiquitin-like"/>
    <property type="match status" value="1"/>
</dbReference>
<dbReference type="PROSITE" id="PS50297">
    <property type="entry name" value="ANK_REP_REGION"/>
    <property type="match status" value="1"/>
</dbReference>
<dbReference type="PROSITE" id="PS50088">
    <property type="entry name" value="ANK_REPEAT"/>
    <property type="match status" value="2"/>
</dbReference>
<dbReference type="PROSITE" id="PS50002">
    <property type="entry name" value="SH3"/>
    <property type="match status" value="1"/>
</dbReference>
<sequence>MMPMILTVFLSNNEQILTEVPITPETTCRDVVEFCKEPGEGGCHLAEVWRGSERPIPYDHMMYEHLQKWGPRREEVKFFLRHEDSPTESSEQGARQTQEQRTQRSVVNVPGEKRTENGVGNPRVELTLSELQDMAARQQQQIENQQQMLVAKEQRLHFLKQQERRQQQSVSENEKLQKLKERVEAQENKLKKIRAMRGQVDYSKIMNGNLSAEIERFSAMFQEKKQEVQTAILRVDQLSQQLEDLKKGKLNGFQSYNGRLTGPAAVELKRLYQELQIRNQLNQEQNSKLQQQKELLNKRNMEVAMMDKRISELRERLYGKKIQLNRVNGTSSPQSPLSTSGRVAAVGPYIQVPSTGGFPLPGDPVKPQSLTIASSAAHGRSKSANDGNWPPLKQNSASVKSTQMTGDWKDSGMEGTLKQGAISSQPLPLSALGATEKLGIEIGKGPPPIPGVGKPLPPSYGTYPSSGPLGPGSTSSLERRKEGSLPRPGAGPPSRQKPAPLPPASNAPQPGSSQQIQQRISVPPSPTYPPAGPPAFPTGDGKPELPLTVAIRPFLADKGSRPQSPRKGPQTVNSSSIYSMYLQQATPPKNYQPPAHGTLNKSVKAVYGKPVLPSGSASPSPLPFLHGSLGTGTAQPQPPSDSAEKEPEQEGPSVPGEGSTVESLPRPLSPTKLTPIVHSPLRYQSDADLEALRRKLANAPRPLKKRSSITEPEGPGGPNIQKLLYQRFNTLAGGMEGTPFYQPSPSQDFVGTLADMDNGNTNANGNLDEPFPPRPTAPLPEELAPSSDANDNELPSPEPEELICPQTTHQTAEPTEDNNNNVAPVPSTEQIPSPVAEAPSEEDQVPPAPLSPVIHPPAASASKRTNLKKPNSERTGHGLRVRFNPLALLLDASLEGEFDLVQRIIYEVEDPSKPNDEGITPLHNAVCAGHHHIVKFLLDFGVNVNAADSDGWTPLHCAASCNSVHLCKQLVESGAAIFASTISDIETAADKCEEMEEGYIQCSQFLYGVQEKLGVMNKGTVYALWDYEAQNSDELSFHEGDAITILRRKDENETEWWWARLGDREGYVPKNLLGLYPRIKPRQRTLA</sequence>